<evidence type="ECO:0000250" key="1"/>
<evidence type="ECO:0000255" key="2"/>
<evidence type="ECO:0000256" key="3">
    <source>
        <dbReference type="SAM" id="MobiDB-lite"/>
    </source>
</evidence>
<evidence type="ECO:0000305" key="4"/>
<comment type="function">
    <text evidence="1">An anti-sigma factor for extracytoplasmic function (ECF) sigma factor SigK. ECF sigma factors are held in an inactive form by an anti-sigma factor until released by regulated intramembrane proteolysis (RIP). RIP occurs when an extracytoplasmic signal triggers a concerted proteolytic cascade to transmit information and elicit cellular responses. The membrane-spanning regulatory substrate protein is first cut extracytoplasmically (site-1 protease, S1P), then within the membrane itself (site-2 protease, S2P, Rip1), while cytoplasmic proteases finish degrading the regulatory protein, liberating the sigma factor (By similarity).</text>
</comment>
<comment type="subcellular location">
    <subcellularLocation>
        <location evidence="4">Cell membrane</location>
        <topology evidence="4">Single-pass membrane protein</topology>
    </subcellularLocation>
</comment>
<comment type="domain">
    <text evidence="1">The cytosolic domain interacts with sigma factor SigK.</text>
</comment>
<comment type="similarity">
    <text evidence="4">Belongs to the anti-sigma-K factor family.</text>
</comment>
<feature type="chain" id="PRO_0000313834" description="Anti-sigma-K factor RskA">
    <location>
        <begin position="1"/>
        <end position="243"/>
    </location>
</feature>
<feature type="topological domain" description="Cytoplasmic" evidence="2">
    <location>
        <begin position="1"/>
        <end position="102"/>
    </location>
</feature>
<feature type="transmembrane region" description="Helical" evidence="2">
    <location>
        <begin position="103"/>
        <end position="123"/>
    </location>
</feature>
<feature type="topological domain" description="Extracellular" evidence="2">
    <location>
        <begin position="124"/>
        <end position="243"/>
    </location>
</feature>
<feature type="region of interest" description="Disordered" evidence="3">
    <location>
        <begin position="223"/>
        <end position="243"/>
    </location>
</feature>
<name>RSKA_MYCSS</name>
<sequence length="243" mass="25147">MTEPNNTDLLDLATPYALHAVSIDERFEIDRWLATAPPEVADAFTDEVRSVQETMAVLSAATATEPPAHLRDNVLAMVADDPVRDLGSARRRRGGESRWRTAVLAAAAVAVVGLGALGVGLALRPAVSPTTADQVFAAPDVQTVSGPIPGGGTATVVFSKERDAGVLVMNDVAPPKPGTVYQMWLVGSDGPHSAGTMDDKAISPSTTAVLSDIGTSQALAFTVEPPGGSQRPTSPAFAELPLT</sequence>
<protein>
    <recommendedName>
        <fullName>Anti-sigma-K factor RskA</fullName>
    </recommendedName>
    <alternativeName>
        <fullName>Regulator of SigK</fullName>
    </alternativeName>
    <alternativeName>
        <fullName>Sigma-K anti-sigma factor RskA</fullName>
    </alternativeName>
</protein>
<organism>
    <name type="scientific">Mycobacterium sp. (strain MCS)</name>
    <dbReference type="NCBI Taxonomy" id="164756"/>
    <lineage>
        <taxon>Bacteria</taxon>
        <taxon>Bacillati</taxon>
        <taxon>Actinomycetota</taxon>
        <taxon>Actinomycetes</taxon>
        <taxon>Mycobacteriales</taxon>
        <taxon>Mycobacteriaceae</taxon>
        <taxon>Mycobacterium</taxon>
    </lineage>
</organism>
<dbReference type="EMBL" id="CP000384">
    <property type="protein sequence ID" value="ABG10477.1"/>
    <property type="molecule type" value="Genomic_DNA"/>
</dbReference>
<dbReference type="SMR" id="Q1B3Q7"/>
<dbReference type="KEGG" id="mmc:Mmcs_4372"/>
<dbReference type="HOGENOM" id="CLU_075802_1_1_11"/>
<dbReference type="BioCyc" id="MSP164756:G1G6O-4468-MONOMER"/>
<dbReference type="GO" id="GO:0005886">
    <property type="term" value="C:plasma membrane"/>
    <property type="evidence" value="ECO:0007669"/>
    <property type="project" value="UniProtKB-SubCell"/>
</dbReference>
<dbReference type="GO" id="GO:0016989">
    <property type="term" value="F:sigma factor antagonist activity"/>
    <property type="evidence" value="ECO:0007669"/>
    <property type="project" value="TreeGrafter"/>
</dbReference>
<dbReference type="GO" id="GO:0006417">
    <property type="term" value="P:regulation of translation"/>
    <property type="evidence" value="ECO:0007669"/>
    <property type="project" value="TreeGrafter"/>
</dbReference>
<dbReference type="Gene3D" id="1.10.10.1320">
    <property type="entry name" value="Anti-sigma factor, zinc-finger domain"/>
    <property type="match status" value="1"/>
</dbReference>
<dbReference type="InterPro" id="IPR051474">
    <property type="entry name" value="Anti-sigma-K/W_factor"/>
</dbReference>
<dbReference type="InterPro" id="IPR041916">
    <property type="entry name" value="Anti_sigma_zinc_sf"/>
</dbReference>
<dbReference type="InterPro" id="IPR018764">
    <property type="entry name" value="RskA_C"/>
</dbReference>
<dbReference type="InterPro" id="IPR053877">
    <property type="entry name" value="RskA_N"/>
</dbReference>
<dbReference type="PANTHER" id="PTHR37461">
    <property type="entry name" value="ANTI-SIGMA-K FACTOR RSKA"/>
    <property type="match status" value="1"/>
</dbReference>
<dbReference type="PANTHER" id="PTHR37461:SF1">
    <property type="entry name" value="ANTI-SIGMA-K FACTOR RSKA"/>
    <property type="match status" value="1"/>
</dbReference>
<dbReference type="Pfam" id="PF10099">
    <property type="entry name" value="RskA_C"/>
    <property type="match status" value="1"/>
</dbReference>
<dbReference type="Pfam" id="PF22618">
    <property type="entry name" value="RskA_N"/>
    <property type="match status" value="1"/>
</dbReference>
<accession>Q1B3Q7</accession>
<reference key="1">
    <citation type="submission" date="2006-06" db="EMBL/GenBank/DDBJ databases">
        <title>Complete sequence of chromosome of Mycobacterium sp. MCS.</title>
        <authorList>
            <consortium name="US DOE Joint Genome Institute"/>
            <person name="Copeland A."/>
            <person name="Lucas S."/>
            <person name="Lapidus A."/>
            <person name="Barry K."/>
            <person name="Detter J.C."/>
            <person name="Glavina del Rio T."/>
            <person name="Hammon N."/>
            <person name="Israni S."/>
            <person name="Dalin E."/>
            <person name="Tice H."/>
            <person name="Pitluck S."/>
            <person name="Martinez M."/>
            <person name="Schmutz J."/>
            <person name="Larimer F."/>
            <person name="Land M."/>
            <person name="Hauser L."/>
            <person name="Kyrpides N."/>
            <person name="Kim E."/>
            <person name="Miller C.D."/>
            <person name="Hughes J.E."/>
            <person name="Anderson A.J."/>
            <person name="Sims R.C."/>
            <person name="Richardson P."/>
        </authorList>
    </citation>
    <scope>NUCLEOTIDE SEQUENCE [LARGE SCALE GENOMIC DNA]</scope>
    <source>
        <strain>MCS</strain>
    </source>
</reference>
<gene>
    <name type="primary">rskA</name>
    <name type="ordered locus">Mmcs_4372</name>
</gene>
<keyword id="KW-1003">Cell membrane</keyword>
<keyword id="KW-0472">Membrane</keyword>
<keyword id="KW-0804">Transcription</keyword>
<keyword id="KW-0805">Transcription regulation</keyword>
<keyword id="KW-0812">Transmembrane</keyword>
<keyword id="KW-1133">Transmembrane helix</keyword>
<proteinExistence type="inferred from homology"/>